<accession>Q7A2C5</accession>
<accession>Q44279</accession>
<gene>
    <name evidence="4 9" type="primary">hetP</name>
    <name type="ordered locus">alr2818</name>
</gene>
<feature type="chain" id="PRO_0000459612" description="Heterocyst differentiation protein HetP">
    <location>
        <begin position="1"/>
        <end position="159"/>
    </location>
</feature>
<feature type="region of interest" description="Required to complement a hetP deletion" evidence="2">
    <location>
        <begin position="1"/>
        <end position="50"/>
    </location>
</feature>
<feature type="mutagenesis site" description="Does not complement a hetP deletion." evidence="2">
    <original>C</original>
    <variation>A</variation>
    <location>
        <position position="36"/>
    </location>
</feature>
<feature type="mutagenesis site" description="Fully complements a hetP deletion." evidence="2">
    <original>C</original>
    <variation>A</variation>
    <location>
        <position position="96"/>
    </location>
</feature>
<proteinExistence type="evidence at protein level"/>
<evidence type="ECO:0000269" key="1">
    <source>
    </source>
</evidence>
<evidence type="ECO:0000269" key="2">
    <source>
    </source>
</evidence>
<evidence type="ECO:0000269" key="3">
    <source>
    </source>
</evidence>
<evidence type="ECO:0000303" key="4">
    <source>
    </source>
</evidence>
<evidence type="ECO:0000303" key="5">
    <source>
    </source>
</evidence>
<evidence type="ECO:0000305" key="6"/>
<evidence type="ECO:0000305" key="7">
    <source>
    </source>
</evidence>
<evidence type="ECO:0000312" key="8">
    <source>
        <dbReference type="EMBL" id="AAA80561.1"/>
    </source>
</evidence>
<evidence type="ECO:0000312" key="9">
    <source>
        <dbReference type="EMBL" id="BAB74517.1"/>
    </source>
</evidence>
<dbReference type="EMBL" id="L26915">
    <property type="protein sequence ID" value="AAA80561.1"/>
    <property type="molecule type" value="Genomic_DNA"/>
</dbReference>
<dbReference type="EMBL" id="BA000019">
    <property type="protein sequence ID" value="BAB74517.1"/>
    <property type="molecule type" value="Genomic_DNA"/>
</dbReference>
<dbReference type="PIR" id="AC2158">
    <property type="entry name" value="AC2158"/>
</dbReference>
<dbReference type="RefSeq" id="WP_010996969.1">
    <property type="nucleotide sequence ID" value="NZ_RSCN01000003.1"/>
</dbReference>
<dbReference type="STRING" id="103690.gene:10494852"/>
<dbReference type="KEGG" id="ana:alr2818"/>
<dbReference type="eggNOG" id="ENOG50330ND">
    <property type="taxonomic scope" value="Bacteria"/>
</dbReference>
<dbReference type="OrthoDB" id="532598at2"/>
<dbReference type="Proteomes" id="UP000002483">
    <property type="component" value="Chromosome"/>
</dbReference>
<dbReference type="GO" id="GO:0043158">
    <property type="term" value="P:heterocyst development"/>
    <property type="evidence" value="ECO:0007669"/>
    <property type="project" value="UniProtKB-KW"/>
</dbReference>
<dbReference type="InterPro" id="IPR049598">
    <property type="entry name" value="HetP-like"/>
</dbReference>
<dbReference type="NCBIfam" id="NF037966">
    <property type="entry name" value="HetP_family"/>
    <property type="match status" value="1"/>
</dbReference>
<organism>
    <name type="scientific">Nostoc sp. (strain PCC 7120 / SAG 25.82 / UTEX 2576)</name>
    <dbReference type="NCBI Taxonomy" id="103690"/>
    <lineage>
        <taxon>Bacteria</taxon>
        <taxon>Bacillati</taxon>
        <taxon>Cyanobacteriota</taxon>
        <taxon>Cyanophyceae</taxon>
        <taxon>Nostocales</taxon>
        <taxon>Nostocaceae</taxon>
        <taxon>Nostoc</taxon>
    </lineage>
</organism>
<sequence>MNQNTTGITNYNKAINPQQFDKVVEAILAGKYSWACVLMLRFAGYNPMHYIPYRTYNRLLKENSEASKVQQQQHDNLKNSQVAAVSRSNTNMPSSCLSKIKDLAYLEVVGKQTTEIHGGNLDQWLTEQVHEFQDMYLEPQAISNQDITFKLSDLDFIHN</sequence>
<protein>
    <recommendedName>
        <fullName evidence="5">Heterocyst differentiation protein HetP</fullName>
        <shortName evidence="5">HetP</shortName>
    </recommendedName>
</protein>
<keyword id="KW-0364">Heterocyst</keyword>
<keyword id="KW-1185">Reference proteome</keyword>
<reference evidence="8" key="1">
    <citation type="journal article" date="1994" name="J. Bacteriol.">
        <title>A third genetic locus required for the formation of heterocysts in Anabaena sp. strain PCC 7120.</title>
        <authorList>
            <person name="Fernandez-Pinas F."/>
            <person name="Leganes F."/>
            <person name="Wolk C.P."/>
        </authorList>
    </citation>
    <scope>NUCLEOTIDE SEQUENCE [GENOMIC DNA]</scope>
    <scope>FUNCTION</scope>
    <scope>DISRUPTION PHENOTYPE</scope>
    <source>
        <strain>PCC 7120 / SAG 25.82 / UTEX 2576</strain>
    </source>
</reference>
<reference evidence="9" key="2">
    <citation type="journal article" date="2001" name="DNA Res.">
        <title>Complete genomic sequence of the filamentous nitrogen-fixing cyanobacterium Anabaena sp. strain PCC 7120.</title>
        <authorList>
            <person name="Kaneko T."/>
            <person name="Nakamura Y."/>
            <person name="Wolk C.P."/>
            <person name="Kuritz T."/>
            <person name="Sasamoto S."/>
            <person name="Watanabe A."/>
            <person name="Iriguchi M."/>
            <person name="Ishikawa A."/>
            <person name="Kawashima K."/>
            <person name="Kimura T."/>
            <person name="Kishida Y."/>
            <person name="Kohara M."/>
            <person name="Matsumoto M."/>
            <person name="Matsuno A."/>
            <person name="Muraki A."/>
            <person name="Nakazaki N."/>
            <person name="Shimpo S."/>
            <person name="Sugimoto M."/>
            <person name="Takazawa M."/>
            <person name="Yamada M."/>
            <person name="Yasuda M."/>
            <person name="Tabata S."/>
        </authorList>
    </citation>
    <scope>NUCLEOTIDE SEQUENCE [LARGE SCALE GENOMIC DNA]</scope>
    <source>
        <strain>PCC 7120 / SAG 25.82 / UTEX 2576</strain>
    </source>
</reference>
<reference key="3">
    <citation type="journal article" date="2010" name="Mol. Microbiol.">
        <title>Ectopic expression of hetP can partially bypass the need for hetR in heterocyst differentiation by Anabaena sp. strain PCC 7120.</title>
        <authorList>
            <person name="Higa K.C."/>
            <person name="Callahan S.M."/>
        </authorList>
    </citation>
    <scope>FUNCTION</scope>
    <scope>DEVELOPMENTAL STAGE</scope>
    <scope>INDUCTION BY NITROGEN STARVATION</scope>
    <scope>DISRUPTION PHENOTYPE</scope>
    <source>
        <strain>PCC 7120 / SAG 25.82 / UTEX 2576</strain>
    </source>
</reference>
<reference key="4">
    <citation type="journal article" date="2016" name="Proc. Natl. Acad. Sci. U.S.A.">
        <title>The heterocyst regulatory protein HetP and its homologs modulate heterocyst commitment in Anabaena sp. strain PCC 7120.</title>
        <authorList>
            <person name="Videau P."/>
            <person name="Rivers O.S."/>
            <person name="Hurd K."/>
            <person name="Ushijima B."/>
            <person name="Oshiro R.T."/>
            <person name="Ende R.J."/>
            <person name="O'Hanlon S.M."/>
            <person name="Cozy L.M."/>
        </authorList>
    </citation>
    <scope>FUNCTION</scope>
    <scope>SUBUNIT</scope>
    <scope>INDUCTION BY NITROGEN DEPRIVATION</scope>
    <scope>DOMAIN</scope>
    <scope>DISRUPTION PHENOTYPE</scope>
    <scope>MUTAGENESIS OF CYS-36 AND CYS-96</scope>
    <source>
        <strain>PCC 7120 / SAG 25.82 / UTEX 2576</strain>
    </source>
</reference>
<comment type="function">
    <text evidence="1 2 3 7">Promotes heterocyst differentiation and commitment when nitrogen is limiting (PubMed:27791130). Interplay between the 4 HetP paralogs controls the timing of commitment to heterocyst formation and its duration (PubMed:27791130). Epistatic analysis show that the 3 paralogs act upstream of hetP to delay commitment (asl1930, alr3234) or inhibit development (alr2902) (PubMed:27791130). Asl1930 and Alr3234 must also attenuate the activity of Alr2902 (PubMed:27791130). Required for heterocyst formation (PubMed:20545862, PubMed:8071202). Functions directly downstream of master regulator HetR to promote heterocyst differentiation, functioning downstream of patterning (cell choice) (Probable) (PubMed:20545862, PubMed:27791130). Partially functionally redundant with homologs alr2902 and asl1930 but not alr3234 (PubMed:20545862). Overexpression leads to more than wild-type levels of heterocysts (PubMed:20545862, PubMed:8071202). Overexpression in the absence of hetR partially bypasses hetR deletion, allowing differentiation of heterocysts, although they only fix nitrogen in the absence of oxygen (a Fox- Fix+ phenotype), suggesting they are not fully (PubMed:20545862, PubMed:8071202).</text>
</comment>
<comment type="subunit">
    <text evidence="2">In bacterial two-hybrid assays interacts weakly with Asl1930, Alr2902 and Alr3234 (PubMed:27791130).</text>
</comment>
<comment type="developmental stage">
    <text evidence="1">Transcription is highest in heterocysts (PubMed:20545862).</text>
</comment>
<comment type="induction">
    <text evidence="1 2">By nitrogen deficiency; expressed in proheterocysts and heterocysts, transcription requires hetR and is suppressed by patA (PubMed:20545862). Transcription is up-regulated by 6 hours after nitrogen stepdown, and remains high for at least 24 hours (PubMed:27791130).</text>
</comment>
<comment type="domain">
    <text evidence="2">The first 68 residues are fully capable of complementing a hetP deletion.</text>
</comment>
<comment type="disruption phenotype">
    <text evidence="1 2 3">Normal vegetative growth, unable to differentiate heterocysts in 24 hours, by 72 hours less than 1% of cells are heterocysts (PubMed:20545862, PubMed:8071202). No heterocysts appear before 48 hours, by 120 hours only 3% heterocysts form. Double hetP-asl1930, hetp-alr2902 and hetP-alr3234 deletions have the same phenotype. A triple asl1930-alr2902-alr3234 deletion makes 50% more heterocysts than wild-type (although they are not active for N(2) fixation), while a quadruple hetP-asl1930-alr2902-alr3234 deletion has delayed development but makes wild-type levels of N(2)-fixing heterocysts by 72 hours (PubMed:27791130).</text>
</comment>
<comment type="miscellaneous">
    <text evidence="1 2">In Nostoc filaments, approximately every 10th vegetative cell terminally differentiates into a heterocyst specialized for nitrogen fixation under nitrogen deficiency (PubMed:20545862, PubMed:27791130).</text>
</comment>
<comment type="similarity">
    <text evidence="6">Belongs to the HetP family.</text>
</comment>
<name>HETP_NOSS1</name>